<proteinExistence type="evidence at protein level"/>
<name>NHEJ1_XENLA</name>
<reference evidence="9" key="1">
    <citation type="journal article" date="2016" name="Nature">
        <title>Genome evolution in the allotetraploid frog Xenopus laevis.</title>
        <authorList>
            <person name="Session A.M."/>
            <person name="Uno Y."/>
            <person name="Kwon T."/>
            <person name="Chapman J.A."/>
            <person name="Toyoda A."/>
            <person name="Takahashi S."/>
            <person name="Fukui A."/>
            <person name="Hikosaka A."/>
            <person name="Suzuki A."/>
            <person name="Kondo M."/>
            <person name="van Heeringen S.J."/>
            <person name="Quigley I."/>
            <person name="Heinz S."/>
            <person name="Ogino H."/>
            <person name="Ochi H."/>
            <person name="Hellsten U."/>
            <person name="Lyons J.B."/>
            <person name="Simakov O."/>
            <person name="Putnam N."/>
            <person name="Stites J."/>
            <person name="Kuroki Y."/>
            <person name="Tanaka T."/>
            <person name="Michiue T."/>
            <person name="Watanabe M."/>
            <person name="Bogdanovic O."/>
            <person name="Lister R."/>
            <person name="Georgiou G."/>
            <person name="Paranjpe S.S."/>
            <person name="van Kruijsbergen I."/>
            <person name="Shu S."/>
            <person name="Carlson J."/>
            <person name="Kinoshita T."/>
            <person name="Ohta Y."/>
            <person name="Mawaribuchi S."/>
            <person name="Jenkins J."/>
            <person name="Grimwood J."/>
            <person name="Schmutz J."/>
            <person name="Mitros T."/>
            <person name="Mozaffari S.V."/>
            <person name="Suzuki Y."/>
            <person name="Haramoto Y."/>
            <person name="Yamamoto T.S."/>
            <person name="Takagi C."/>
            <person name="Heald R."/>
            <person name="Miller K."/>
            <person name="Haudenschild C."/>
            <person name="Kitzman J."/>
            <person name="Nakayama T."/>
            <person name="Izutsu Y."/>
            <person name="Robert J."/>
            <person name="Fortriede J."/>
            <person name="Burns K."/>
            <person name="Lotay V."/>
            <person name="Karimi K."/>
            <person name="Yasuoka Y."/>
            <person name="Dichmann D.S."/>
            <person name="Flajnik M.F."/>
            <person name="Houston D.W."/>
            <person name="Shendure J."/>
            <person name="DuPasquier L."/>
            <person name="Vize P.D."/>
            <person name="Zorn A.M."/>
            <person name="Ito M."/>
            <person name="Marcotte E.M."/>
            <person name="Wallingford J.B."/>
            <person name="Ito Y."/>
            <person name="Asashima M."/>
            <person name="Ueno N."/>
            <person name="Matsuda Y."/>
            <person name="Veenstra G.J."/>
            <person name="Fujiyama A."/>
            <person name="Harland R.M."/>
            <person name="Taira M."/>
            <person name="Rokhsar D.S."/>
        </authorList>
    </citation>
    <scope>NUCLEOTIDE SEQUENCE [LARGE SCALE GENOMIC DNA]</scope>
    <source>
        <strain evidence="9">J</strain>
    </source>
</reference>
<reference evidence="6" key="2">
    <citation type="journal article" date="2018" name="Nat. Struct. Mol. Biol.">
        <title>A single XLF dimer bridges DNA ends during nonhomologous end joining.</title>
        <authorList>
            <person name="Graham T.G.W."/>
            <person name="Carney S.M."/>
            <person name="Walter J.C."/>
            <person name="Loparo J.J."/>
        </authorList>
    </citation>
    <scope>FUNCTION</scope>
    <scope>SUBUNIT</scope>
    <scope>INTERACTION WITH XRCC4</scope>
    <scope>MUTAGENESIS OF LEU-62 AND LEU-111</scope>
</reference>
<reference evidence="6" key="3">
    <citation type="journal article" date="2020" name="Elife">
        <title>XLF acts as a flexible connector during non-homologous end joining.</title>
        <authorList>
            <person name="Carney S.M."/>
            <person name="Moreno A.T."/>
            <person name="Piatt S.C."/>
            <person name="Cisneros-Aguirre M."/>
            <person name="Lopezcolorado F.W."/>
            <person name="Stark J.M."/>
            <person name="Loparo J.J."/>
        </authorList>
    </citation>
    <scope>FUNCTION</scope>
    <scope>IDENTIFICATION IN NHEJ COMPLEX</scope>
    <scope>DOMAIN</scope>
    <scope>MUTAGENESIS OF LEU-111</scope>
</reference>
<reference evidence="11 12" key="4">
    <citation type="journal article" date="2020" name="DNA Repair">
        <title>Ligand binding characteristics of the Ku80 von Willebrand domain.</title>
        <authorList>
            <person name="Kim K."/>
            <person name="Min J."/>
            <person name="Kirby T.W."/>
            <person name="Gabel S.A."/>
            <person name="Pedersen L.C."/>
            <person name="London R.E."/>
        </authorList>
    </citation>
    <scope>X-RAY CRYSTALLOGRAPHY (1.90 ANGSTROMS) OF 280-297 IN COMPLEX WITH XRCC5</scope>
</reference>
<accession>A0A1L8ENT6</accession>
<accession>A0A974BU37</accession>
<organism evidence="8">
    <name type="scientific">Xenopus laevis</name>
    <name type="common">African clawed frog</name>
    <dbReference type="NCBI Taxonomy" id="8355"/>
    <lineage>
        <taxon>Eukaryota</taxon>
        <taxon>Metazoa</taxon>
        <taxon>Chordata</taxon>
        <taxon>Craniata</taxon>
        <taxon>Vertebrata</taxon>
        <taxon>Euteleostomi</taxon>
        <taxon>Amphibia</taxon>
        <taxon>Batrachia</taxon>
        <taxon>Anura</taxon>
        <taxon>Pipoidea</taxon>
        <taxon>Pipidae</taxon>
        <taxon>Xenopodinae</taxon>
        <taxon>Xenopus</taxon>
        <taxon>Xenopus</taxon>
    </lineage>
</organism>
<comment type="function">
    <text evidence="1 3 4">DNA repair protein involved in DNA non-homologous end joining (NHEJ); required for double-strand break (DSB) repair and V(D)J recombination (PubMed:30177755, PubMed:33289484). It is also involved in telomere maintenance (By similarity). Plays a key role in NHEJ by promoting the ligation of various mismatched and non-cohesive ends (By similarity). In some studies, has been shown to associate with xrcc4 to form alternating helical filaments that bridge DNA and act like a bandage, holding together the broken DNA until it is repaired (By similarity). Alternatively, it has also been shown that rather than forming filaments, a single nhej1 dimer interacts through both head domains with xrcc4 to promote the close alignment of DNA ends (PubMed:30177755). The xrcc4-nhej1/xlf subcomplex binds to the DNA fragments of a DSB in a highly diffusive manner and robustly bridges two independent DNA molecules, holding the broken DNA fragments in close proximity to one other (By similarity). The mobility of the bridges ensures that the ends remain accessible for further processing by other repair factors (By similarity).</text>
</comment>
<comment type="subunit">
    <text evidence="3 4">Homodimer (PubMed:30177755). Interacts with xrcc4; the interaction is direct and is mediated via a head-to-head interaction between N-terminal head regions (PubMed:30177755). Component of the core long-range non-homologous end joining (NHEJ) complex (also named DNA-PK complex) composed of prkdc/DNA-PKcs, lig4, xrcc4, xrcc6/Ku70, xrcc5/Ku80 and nhej1/xlf (PubMed:33289484).</text>
</comment>
<comment type="subcellular location">
    <subcellularLocation>
        <location evidence="1">Nucleus</location>
    </subcellularLocation>
</comment>
<comment type="domain">
    <text evidence="1">The coiled-coil region mediates homodimerization.</text>
</comment>
<comment type="domain">
    <text evidence="1">The Leu-lock (Leu-111) site inserts into a hydrophobic pocket in xrcc4.</text>
</comment>
<comment type="domain">
    <text evidence="4">The XLM motif (also called the KBM motif or KBMX motif) and the interior region of the C-terminal tail preceding the XLM motif are essential for DNA end joining (PubMed:33289484). The sequence of the C-terminal tail is not critical for its role in end joining but it must be sufficiently long to interact with xrcc4 and to stabilize the interaction of xrcc4 with lig4 (PubMed:33289484). A single XLM motif and C-terminal tail is sufficient to promote end joining (PubMed:33289484).</text>
</comment>
<comment type="similarity">
    <text evidence="6">Belongs to the XRCC4-XLF family. XLF subfamily.</text>
</comment>
<comment type="sequence caution" evidence="6">
    <conflict type="erroneous initiation">
        <sequence resource="EMBL-CDS" id="OCT61004"/>
    </conflict>
    <text>Extended N-terminus.</text>
</comment>
<feature type="chain" id="PRO_0000460029" description="Non-homologous end-joining factor 1">
    <location>
        <begin position="1"/>
        <end position="297"/>
    </location>
</feature>
<feature type="region of interest" description="Globular head" evidence="1">
    <location>
        <begin position="1"/>
        <end position="131"/>
    </location>
</feature>
<feature type="region of interest" description="C-terminal tail" evidence="7">
    <location>
        <begin position="220"/>
        <end position="286"/>
    </location>
</feature>
<feature type="region of interest" description="Disordered" evidence="2">
    <location>
        <begin position="222"/>
        <end position="297"/>
    </location>
</feature>
<feature type="short sequence motif" description="XLM" evidence="1">
    <location>
        <begin position="287"/>
        <end position="297"/>
    </location>
</feature>
<feature type="compositionally biased region" description="Polar residues" evidence="2">
    <location>
        <begin position="232"/>
        <end position="255"/>
    </location>
</feature>
<feature type="compositionally biased region" description="Low complexity" evidence="2">
    <location>
        <begin position="263"/>
        <end position="286"/>
    </location>
</feature>
<feature type="compositionally biased region" description="Basic residues" evidence="2">
    <location>
        <begin position="287"/>
        <end position="297"/>
    </location>
</feature>
<feature type="site" description="Leu-lock" evidence="1">
    <location>
        <position position="111"/>
    </location>
</feature>
<feature type="mutagenesis site" description="Abolishes interaction with xrcc4 and DNA bridging. Does not rescue end joining in xlf-depleted egg extract." evidence="3">
    <original>L</original>
    <variation>D</variation>
    <location>
        <position position="62"/>
    </location>
</feature>
<feature type="mutagenesis site" description="Does not affect interaction with xrcc4. Supports end joining in xlf-depleted egg extract. Does not bridge DNA in pulldown experiments with xrcc4." evidence="3">
    <original>L</original>
    <variation>A</variation>
    <location>
        <position position="111"/>
    </location>
</feature>
<feature type="mutagenesis site" description="Abolishes interaction with xrcc4. Does not rescue end joining in xlf-depleted egg extract. Associates with DNA ends but does not stabilize the interaction between xrcc4 and lig4." evidence="3 4">
    <original>L</original>
    <variation>D</variation>
    <location>
        <position position="111"/>
    </location>
</feature>
<feature type="helix" evidence="13">
    <location>
        <begin position="294"/>
        <end position="296"/>
    </location>
</feature>
<keyword id="KW-0002">3D-structure</keyword>
<keyword id="KW-0227">DNA damage</keyword>
<keyword id="KW-0234">DNA repair</keyword>
<keyword id="KW-0238">DNA-binding</keyword>
<keyword id="KW-0539">Nucleus</keyword>
<keyword id="KW-1185">Reference proteome</keyword>
<sequence>MDARLLQLPWRSLRIADCIFMGKVCFTESSYALLLSDLSSMWCEEAKADIIQDRARELNKRLKAPVSSFLSYLSQIVFPVLNSKDNGQNIFSCHRSEAELLLQVKSQLSGLPFYWSFHCKEATVSTVCRHLVRPLKSMTEALESQNQELCLLLKKKDAEIQEYQDSGAVLTRDRLKTEVFDELKFQKSFLAEKVQGLCMSGKAPGFSEQLQQLYDAVIAPKAPTHPKEEDTGNSASHRPMAESSSISFEKTVPTQERTEGGAVSEPSQVPQSSVSCLTHRPPAGASKPKKKAKGLFM</sequence>
<evidence type="ECO:0000250" key="1">
    <source>
        <dbReference type="UniProtKB" id="Q9H9Q4"/>
    </source>
</evidence>
<evidence type="ECO:0000256" key="2">
    <source>
        <dbReference type="SAM" id="MobiDB-lite"/>
    </source>
</evidence>
<evidence type="ECO:0000269" key="3">
    <source>
    </source>
</evidence>
<evidence type="ECO:0000269" key="4">
    <source>
    </source>
</evidence>
<evidence type="ECO:0000303" key="5">
    <source>
    </source>
</evidence>
<evidence type="ECO:0000305" key="6"/>
<evidence type="ECO:0000305" key="7">
    <source>
    </source>
</evidence>
<evidence type="ECO:0000312" key="8">
    <source>
        <dbReference type="Proteomes" id="UP000186698"/>
    </source>
</evidence>
<evidence type="ECO:0000312" key="9">
    <source>
        <dbReference type="Proteomes" id="UP000694892"/>
    </source>
</evidence>
<evidence type="ECO:0000312" key="10">
    <source>
        <dbReference type="Xenbase" id="XB-GENE-5750977"/>
    </source>
</evidence>
<evidence type="ECO:0007744" key="11">
    <source>
        <dbReference type="PDB" id="6TYT"/>
    </source>
</evidence>
<evidence type="ECO:0007744" key="12">
    <source>
        <dbReference type="PDB" id="6TYX"/>
    </source>
</evidence>
<evidence type="ECO:0007829" key="13">
    <source>
        <dbReference type="PDB" id="6TYX"/>
    </source>
</evidence>
<dbReference type="EMBL" id="CM004483">
    <property type="protein sequence ID" value="OCT61004.1"/>
    <property type="status" value="ALT_INIT"/>
    <property type="molecule type" value="Genomic_DNA"/>
</dbReference>
<dbReference type="RefSeq" id="XP_018094233.1">
    <property type="nucleotide sequence ID" value="XM_018238744.1"/>
</dbReference>
<dbReference type="PDB" id="6TYT">
    <property type="method" value="X-ray"/>
    <property type="resolution" value="2.40 A"/>
    <property type="chains" value="B=280-297"/>
</dbReference>
<dbReference type="PDB" id="6TYX">
    <property type="method" value="X-ray"/>
    <property type="resolution" value="1.90 A"/>
    <property type="chains" value="C/D=280-297"/>
</dbReference>
<dbReference type="PDBsum" id="6TYT"/>
<dbReference type="PDBsum" id="6TYX"/>
<dbReference type="SMR" id="A0A1L8ENT6"/>
<dbReference type="PaxDb" id="8355-A0A1L8ENT6"/>
<dbReference type="GeneID" id="445871"/>
<dbReference type="KEGG" id="xla:445871"/>
<dbReference type="AGR" id="Xenbase:XB-GENE-5750977"/>
<dbReference type="CTD" id="445871"/>
<dbReference type="Xenbase" id="XB-GENE-5750977">
    <property type="gene designation" value="nhej1.S"/>
</dbReference>
<dbReference type="OrthoDB" id="2155935at2759"/>
<dbReference type="Proteomes" id="UP000186698">
    <property type="component" value="Chromosome 9_10S"/>
</dbReference>
<dbReference type="Proteomes" id="UP000694892">
    <property type="component" value="Chromosome 9_10S"/>
</dbReference>
<dbReference type="Bgee" id="445871">
    <property type="expression patterns" value="Expressed in egg cell and 19 other cell types or tissues"/>
</dbReference>
<dbReference type="GO" id="GO:0032807">
    <property type="term" value="C:DNA ligase IV complex"/>
    <property type="evidence" value="ECO:0000318"/>
    <property type="project" value="GO_Central"/>
</dbReference>
<dbReference type="GO" id="GO:0045027">
    <property type="term" value="F:DNA end binding"/>
    <property type="evidence" value="ECO:0000318"/>
    <property type="project" value="GO_Central"/>
</dbReference>
<dbReference type="GO" id="GO:0006303">
    <property type="term" value="P:double-strand break repair via nonhomologous end joining"/>
    <property type="evidence" value="ECO:0000318"/>
    <property type="project" value="GO_Central"/>
</dbReference>
<dbReference type="GO" id="GO:0000723">
    <property type="term" value="P:telomere maintenance"/>
    <property type="evidence" value="ECO:0000250"/>
    <property type="project" value="UniProtKB"/>
</dbReference>
<dbReference type="CDD" id="cd22285">
    <property type="entry name" value="HD_XLF_N"/>
    <property type="match status" value="1"/>
</dbReference>
<dbReference type="FunFam" id="1.10.287.450:FF:000003">
    <property type="entry name" value="Non-homologous end-joining factor 1"/>
    <property type="match status" value="1"/>
</dbReference>
<dbReference type="FunFam" id="2.170.210.10:FF:000001">
    <property type="entry name" value="Non-homologous end-joining factor 1"/>
    <property type="match status" value="1"/>
</dbReference>
<dbReference type="Gene3D" id="2.170.210.10">
    <property type="entry name" value="DNA double-strand break repair and VJ recombination XRCC4, N-terminal"/>
    <property type="match status" value="1"/>
</dbReference>
<dbReference type="Gene3D" id="1.10.287.450">
    <property type="entry name" value="Helix hairpin bin"/>
    <property type="match status" value="1"/>
</dbReference>
<dbReference type="InterPro" id="IPR052287">
    <property type="entry name" value="NHEJ_factor"/>
</dbReference>
<dbReference type="InterPro" id="IPR053829">
    <property type="entry name" value="XLF-like_CC"/>
</dbReference>
<dbReference type="InterPro" id="IPR015381">
    <property type="entry name" value="XLF-like_N"/>
</dbReference>
<dbReference type="InterPro" id="IPR038051">
    <property type="entry name" value="XRCC4-like_N_sf"/>
</dbReference>
<dbReference type="PANTHER" id="PTHR32235">
    <property type="entry name" value="NON-HOMOLOGOUS END-JOINING FACTOR 1"/>
    <property type="match status" value="1"/>
</dbReference>
<dbReference type="PANTHER" id="PTHR32235:SF1">
    <property type="entry name" value="NON-HOMOLOGOUS END-JOINING FACTOR 1"/>
    <property type="match status" value="1"/>
</dbReference>
<dbReference type="Pfam" id="PF09302">
    <property type="entry name" value="XLF"/>
    <property type="match status" value="1"/>
</dbReference>
<dbReference type="Pfam" id="PF21928">
    <property type="entry name" value="XLF_CC"/>
    <property type="match status" value="1"/>
</dbReference>
<gene>
    <name evidence="10" type="primary">nhej1.S</name>
    <name evidence="5" type="synonym">xlf</name>
</gene>
<protein>
    <recommendedName>
        <fullName evidence="10">Non-homologous end-joining factor 1</fullName>
    </recommendedName>
</protein>